<dbReference type="EMBL" id="Z54203">
    <property type="protein sequence ID" value="CAA90910.1"/>
    <property type="molecule type" value="Genomic_DNA"/>
</dbReference>
<dbReference type="EMBL" id="FM180568">
    <property type="protein sequence ID" value="CAS11715.1"/>
    <property type="molecule type" value="Genomic_DNA"/>
</dbReference>
<dbReference type="RefSeq" id="WP_000725344.1">
    <property type="nucleotide sequence ID" value="NC_011601.1"/>
</dbReference>
<dbReference type="BMRB" id="P0A4L6"/>
<dbReference type="SMR" id="P0A4L6"/>
<dbReference type="KEGG" id="ecg:E2348C_4167"/>
<dbReference type="HOGENOM" id="CLU_088255_3_0_6"/>
<dbReference type="Proteomes" id="UP000008205">
    <property type="component" value="Chromosome"/>
</dbReference>
<dbReference type="GO" id="GO:0042597">
    <property type="term" value="C:periplasmic space"/>
    <property type="evidence" value="ECO:0007669"/>
    <property type="project" value="UniProtKB-SubCell"/>
</dbReference>
<dbReference type="GO" id="GO:0015036">
    <property type="term" value="F:disulfide oxidoreductase activity"/>
    <property type="evidence" value="ECO:0007669"/>
    <property type="project" value="UniProtKB-ARBA"/>
</dbReference>
<dbReference type="CDD" id="cd03019">
    <property type="entry name" value="DsbA_DsbA"/>
    <property type="match status" value="1"/>
</dbReference>
<dbReference type="Gene3D" id="3.40.30.10">
    <property type="entry name" value="Glutaredoxin"/>
    <property type="match status" value="2"/>
</dbReference>
<dbReference type="InterPro" id="IPR001853">
    <property type="entry name" value="DSBA-like_thioredoxin_dom"/>
</dbReference>
<dbReference type="InterPro" id="IPR023205">
    <property type="entry name" value="DsbA/DsbL"/>
</dbReference>
<dbReference type="InterPro" id="IPR050824">
    <property type="entry name" value="Thiol_disulfide_DsbA"/>
</dbReference>
<dbReference type="InterPro" id="IPR036249">
    <property type="entry name" value="Thioredoxin-like_sf"/>
</dbReference>
<dbReference type="InterPro" id="IPR017937">
    <property type="entry name" value="Thioredoxin_CS"/>
</dbReference>
<dbReference type="InterPro" id="IPR013766">
    <property type="entry name" value="Thioredoxin_domain"/>
</dbReference>
<dbReference type="NCBIfam" id="NF008198">
    <property type="entry name" value="PRK10954.1"/>
    <property type="match status" value="1"/>
</dbReference>
<dbReference type="PANTHER" id="PTHR35891">
    <property type="entry name" value="THIOL:DISULFIDE INTERCHANGE PROTEIN DSBA"/>
    <property type="match status" value="1"/>
</dbReference>
<dbReference type="PANTHER" id="PTHR35891:SF2">
    <property type="entry name" value="THIOL:DISULFIDE INTERCHANGE PROTEIN DSBA"/>
    <property type="match status" value="1"/>
</dbReference>
<dbReference type="Pfam" id="PF01323">
    <property type="entry name" value="DSBA"/>
    <property type="match status" value="1"/>
</dbReference>
<dbReference type="PIRSF" id="PIRSF001488">
    <property type="entry name" value="Tdi_protein"/>
    <property type="match status" value="1"/>
</dbReference>
<dbReference type="SUPFAM" id="SSF52833">
    <property type="entry name" value="Thioredoxin-like"/>
    <property type="match status" value="1"/>
</dbReference>
<dbReference type="PROSITE" id="PS00194">
    <property type="entry name" value="THIOREDOXIN_1"/>
    <property type="match status" value="1"/>
</dbReference>
<dbReference type="PROSITE" id="PS51352">
    <property type="entry name" value="THIOREDOXIN_2"/>
    <property type="match status" value="1"/>
</dbReference>
<evidence type="ECO:0000250" key="1"/>
<evidence type="ECO:0000255" key="2">
    <source>
        <dbReference type="PROSITE-ProRule" id="PRU00691"/>
    </source>
</evidence>
<evidence type="ECO:0000305" key="3"/>
<accession>P0A4L6</accession>
<accession>B7UNI3</accession>
<accession>P59589</accession>
<name>DSBA_ECO27</name>
<gene>
    <name type="primary">dsbA</name>
    <name type="ordered locus">E2348C_4167</name>
</gene>
<feature type="signal peptide" evidence="1">
    <location>
        <begin position="1"/>
        <end position="19"/>
    </location>
</feature>
<feature type="chain" id="PRO_0000034253" description="Thiol:disulfide interchange protein DsbA">
    <location>
        <begin position="20"/>
        <end position="208"/>
    </location>
</feature>
<feature type="domain" description="Thioredoxin" evidence="2">
    <location>
        <begin position="20"/>
        <end position="150"/>
    </location>
</feature>
<feature type="disulfide bond" description="Redox-active" evidence="2">
    <location>
        <begin position="49"/>
        <end position="52"/>
    </location>
</feature>
<proteinExistence type="inferred from homology"/>
<reference key="1">
    <citation type="journal article" date="1996" name="Mol. Microbiol.">
        <title>DsbA is required for stability of the type IV pilin of enteropathogenic Escherichia coli.</title>
        <authorList>
            <person name="Zhang H.Z."/>
            <person name="Donnenberg M.S."/>
        </authorList>
    </citation>
    <scope>NUCLEOTIDE SEQUENCE [GENOMIC DNA]</scope>
</reference>
<reference key="2">
    <citation type="journal article" date="2009" name="J. Bacteriol.">
        <title>Complete genome sequence and comparative genome analysis of enteropathogenic Escherichia coli O127:H6 strain E2348/69.</title>
        <authorList>
            <person name="Iguchi A."/>
            <person name="Thomson N.R."/>
            <person name="Ogura Y."/>
            <person name="Saunders D."/>
            <person name="Ooka T."/>
            <person name="Henderson I.R."/>
            <person name="Harris D."/>
            <person name="Asadulghani M."/>
            <person name="Kurokawa K."/>
            <person name="Dean P."/>
            <person name="Kenny B."/>
            <person name="Quail M.A."/>
            <person name="Thurston S."/>
            <person name="Dougan G."/>
            <person name="Hayashi T."/>
            <person name="Parkhill J."/>
            <person name="Frankel G."/>
        </authorList>
    </citation>
    <scope>NUCLEOTIDE SEQUENCE [LARGE SCALE GENOMIC DNA]</scope>
    <source>
        <strain>E2348/69 / EPEC</strain>
    </source>
</reference>
<sequence>MKKIWLALAGLVLAFSASAAQYEDGKQYTTLEKPVAGAPQVLEFFSFFCPHCYQFEEVLHISDNVKKKLPEGVKMTKYHVNFMGGDLGKELTQAWAVAMALGVEDKVTVPLFEGVQKTQTIRSASDIRDVFINAGIKGEEYDAAWNSFVVKSLVAQQEKAAADVQLRGVPAMFVNGKYQLNPQGMDTSNMDVFVQQYADTVKYLSEKK</sequence>
<organism>
    <name type="scientific">Escherichia coli O127:H6 (strain E2348/69 / EPEC)</name>
    <dbReference type="NCBI Taxonomy" id="574521"/>
    <lineage>
        <taxon>Bacteria</taxon>
        <taxon>Pseudomonadati</taxon>
        <taxon>Pseudomonadota</taxon>
        <taxon>Gammaproteobacteria</taxon>
        <taxon>Enterobacterales</taxon>
        <taxon>Enterobacteriaceae</taxon>
        <taxon>Escherichia</taxon>
    </lineage>
</organism>
<comment type="function">
    <text evidence="1">Required for disulfide bond formation in some periplasmic proteins such as PhoA or OmpA. Acts by transferring its disulfide bond to other proteins and is reduced in the process. DsbA is reoxidized by DsbB. It is required for pilus biogenesis (By similarity).</text>
</comment>
<comment type="subcellular location">
    <subcellularLocation>
        <location evidence="1">Periplasm</location>
    </subcellularLocation>
</comment>
<comment type="similarity">
    <text evidence="3">Belongs to the thioredoxin family. DsbA subfamily.</text>
</comment>
<protein>
    <recommendedName>
        <fullName>Thiol:disulfide interchange protein DsbA</fullName>
    </recommendedName>
</protein>
<keyword id="KW-1015">Disulfide bond</keyword>
<keyword id="KW-0574">Periplasm</keyword>
<keyword id="KW-0676">Redox-active center</keyword>
<keyword id="KW-1185">Reference proteome</keyword>
<keyword id="KW-0732">Signal</keyword>